<feature type="chain" id="PRO_0000223586" description="Nuclear hormone receptor family member nhr-103">
    <location>
        <begin position="1"/>
        <end position="394"/>
    </location>
</feature>
<feature type="domain" description="NR LBD" evidence="2">
    <location>
        <begin position="126"/>
        <end position="394"/>
    </location>
</feature>
<feature type="DNA-binding region" description="Nuclear receptor" evidence="1">
    <location>
        <begin position="8"/>
        <end position="83"/>
    </location>
</feature>
<feature type="zinc finger region" description="NR C4-type" evidence="1">
    <location>
        <begin position="11"/>
        <end position="31"/>
    </location>
</feature>
<feature type="zinc finger region" description="NR C4-type; degenerate" evidence="1">
    <location>
        <begin position="47"/>
        <end position="66"/>
    </location>
</feature>
<accession>O16359</accession>
<sequence>MPAPLFLSGPCEICGQKTSGRHFGVLSCRSCAAFFRRSATWSRKKVQCVKGTCKIFEDGKFNCKQCRLKKCVEVGMDSKKFQTNRDLISSCSVPQSLCNFLGRPEFILCCEPDKASVFKTTIDVTYLVDMAKNLLEKDPCQCPLSNSLEQLSTTLENMRGMKLNKETQIIKKLGKNESLKTWEQGFLRAVEWFSNFSEFRELDENLKMEILKTCWVSWIRLDKLSETANKRVNATLDNSLLMVGNDSCMHMNDYEVDLSWCTNYSLEQLAFFFLTPDDEKNYRQLIQDMVDLNPSSTEISYMLLQLSLEHAGKRLQGDILEATESLVQAQANQLHDYYAKKLKLSNYSSRLTQLMKITRTLEADMRLRIEKKKVADVFNIFKIQFSHPEMFETT</sequence>
<name>NH103_CAEEL</name>
<protein>
    <recommendedName>
        <fullName>Nuclear hormone receptor family member nhr-103</fullName>
    </recommendedName>
</protein>
<comment type="function">
    <text>Orphan nuclear receptor.</text>
</comment>
<comment type="subcellular location">
    <subcellularLocation>
        <location evidence="1">Nucleus</location>
    </subcellularLocation>
</comment>
<comment type="similarity">
    <text evidence="3">Belongs to the nuclear hormone receptor family.</text>
</comment>
<organism>
    <name type="scientific">Caenorhabditis elegans</name>
    <dbReference type="NCBI Taxonomy" id="6239"/>
    <lineage>
        <taxon>Eukaryota</taxon>
        <taxon>Metazoa</taxon>
        <taxon>Ecdysozoa</taxon>
        <taxon>Nematoda</taxon>
        <taxon>Chromadorea</taxon>
        <taxon>Rhabditida</taxon>
        <taxon>Rhabditina</taxon>
        <taxon>Rhabditomorpha</taxon>
        <taxon>Rhabditoidea</taxon>
        <taxon>Rhabditidae</taxon>
        <taxon>Peloderinae</taxon>
        <taxon>Caenorhabditis</taxon>
    </lineage>
</organism>
<dbReference type="EMBL" id="FO081357">
    <property type="protein sequence ID" value="CCD71004.1"/>
    <property type="molecule type" value="Genomic_DNA"/>
</dbReference>
<dbReference type="PIR" id="T31791">
    <property type="entry name" value="T31791"/>
</dbReference>
<dbReference type="RefSeq" id="NP_503607.1">
    <property type="nucleotide sequence ID" value="NM_071206.2"/>
</dbReference>
<dbReference type="SMR" id="O16359"/>
<dbReference type="BioGRID" id="43762">
    <property type="interactions" value="1"/>
</dbReference>
<dbReference type="FunCoup" id="O16359">
    <property type="interactions" value="45"/>
</dbReference>
<dbReference type="IntAct" id="O16359">
    <property type="interactions" value="1"/>
</dbReference>
<dbReference type="STRING" id="6239.F44C8.4.1"/>
<dbReference type="PaxDb" id="6239-F44C8.4"/>
<dbReference type="EnsemblMetazoa" id="F44C8.4.1">
    <property type="protein sequence ID" value="F44C8.4.1"/>
    <property type="gene ID" value="WBGene00003693"/>
</dbReference>
<dbReference type="GeneID" id="178701"/>
<dbReference type="KEGG" id="cel:CELE_F44C8.4"/>
<dbReference type="UCSC" id="F44C8.4">
    <property type="organism name" value="c. elegans"/>
</dbReference>
<dbReference type="AGR" id="WB:WBGene00003693"/>
<dbReference type="CTD" id="178701"/>
<dbReference type="WormBase" id="F44C8.4">
    <property type="protein sequence ID" value="CE27384"/>
    <property type="gene ID" value="WBGene00003693"/>
    <property type="gene designation" value="nhr-103"/>
</dbReference>
<dbReference type="eggNOG" id="KOG3575">
    <property type="taxonomic scope" value="Eukaryota"/>
</dbReference>
<dbReference type="GeneTree" id="ENSGT00970000195928"/>
<dbReference type="HOGENOM" id="CLU_007368_7_1_1"/>
<dbReference type="InParanoid" id="O16359"/>
<dbReference type="OMA" id="CEPAKIA"/>
<dbReference type="OrthoDB" id="5855160at2759"/>
<dbReference type="PhylomeDB" id="O16359"/>
<dbReference type="PRO" id="PR:O16359"/>
<dbReference type="Proteomes" id="UP000001940">
    <property type="component" value="Chromosome V"/>
</dbReference>
<dbReference type="Bgee" id="WBGene00003693">
    <property type="expression patterns" value="Expressed in pharyngeal muscle cell (C elegans) and 3 other cell types or tissues"/>
</dbReference>
<dbReference type="GO" id="GO:0005634">
    <property type="term" value="C:nucleus"/>
    <property type="evidence" value="ECO:0007669"/>
    <property type="project" value="UniProtKB-SubCell"/>
</dbReference>
<dbReference type="GO" id="GO:0003700">
    <property type="term" value="F:DNA-binding transcription factor activity"/>
    <property type="evidence" value="ECO:0007669"/>
    <property type="project" value="InterPro"/>
</dbReference>
<dbReference type="GO" id="GO:0000978">
    <property type="term" value="F:RNA polymerase II cis-regulatory region sequence-specific DNA binding"/>
    <property type="evidence" value="ECO:0007669"/>
    <property type="project" value="InterPro"/>
</dbReference>
<dbReference type="GO" id="GO:0008270">
    <property type="term" value="F:zinc ion binding"/>
    <property type="evidence" value="ECO:0007669"/>
    <property type="project" value="UniProtKB-KW"/>
</dbReference>
<dbReference type="CDD" id="cd06960">
    <property type="entry name" value="NR_DBD_HNF4A"/>
    <property type="match status" value="1"/>
</dbReference>
<dbReference type="Gene3D" id="3.30.50.10">
    <property type="entry name" value="Erythroid Transcription Factor GATA-1, subunit A"/>
    <property type="match status" value="1"/>
</dbReference>
<dbReference type="Gene3D" id="1.10.565.10">
    <property type="entry name" value="Retinoid X Receptor"/>
    <property type="match status" value="1"/>
</dbReference>
<dbReference type="InterPro" id="IPR051152">
    <property type="entry name" value="C.elegans_Orphan_NR"/>
</dbReference>
<dbReference type="InterPro" id="IPR049636">
    <property type="entry name" value="HNF4-like_DBD"/>
</dbReference>
<dbReference type="InterPro" id="IPR035500">
    <property type="entry name" value="NHR-like_dom_sf"/>
</dbReference>
<dbReference type="InterPro" id="IPR000536">
    <property type="entry name" value="Nucl_hrmn_rcpt_lig-bd"/>
</dbReference>
<dbReference type="InterPro" id="IPR001628">
    <property type="entry name" value="Znf_hrmn_rcpt"/>
</dbReference>
<dbReference type="InterPro" id="IPR013088">
    <property type="entry name" value="Znf_NHR/GATA"/>
</dbReference>
<dbReference type="PANTHER" id="PTHR45680">
    <property type="entry name" value="NUCLEAR HORMONE RECEPTOR FAMILY"/>
    <property type="match status" value="1"/>
</dbReference>
<dbReference type="PANTHER" id="PTHR45680:SF28">
    <property type="entry name" value="NUCLEAR HORMONE RECEPTOR FAMILY-RELATED"/>
    <property type="match status" value="1"/>
</dbReference>
<dbReference type="Pfam" id="PF00104">
    <property type="entry name" value="Hormone_recep"/>
    <property type="match status" value="1"/>
</dbReference>
<dbReference type="Pfam" id="PF00105">
    <property type="entry name" value="zf-C4"/>
    <property type="match status" value="1"/>
</dbReference>
<dbReference type="PRINTS" id="PR00047">
    <property type="entry name" value="STROIDFINGER"/>
</dbReference>
<dbReference type="SMART" id="SM00430">
    <property type="entry name" value="HOLI"/>
    <property type="match status" value="1"/>
</dbReference>
<dbReference type="SMART" id="SM00399">
    <property type="entry name" value="ZnF_C4"/>
    <property type="match status" value="1"/>
</dbReference>
<dbReference type="SUPFAM" id="SSF57716">
    <property type="entry name" value="Glucocorticoid receptor-like (DNA-binding domain)"/>
    <property type="match status" value="1"/>
</dbReference>
<dbReference type="SUPFAM" id="SSF48508">
    <property type="entry name" value="Nuclear receptor ligand-binding domain"/>
    <property type="match status" value="1"/>
</dbReference>
<dbReference type="PROSITE" id="PS51843">
    <property type="entry name" value="NR_LBD"/>
    <property type="match status" value="1"/>
</dbReference>
<dbReference type="PROSITE" id="PS00031">
    <property type="entry name" value="NUCLEAR_REC_DBD_1"/>
    <property type="match status" value="1"/>
</dbReference>
<dbReference type="PROSITE" id="PS51030">
    <property type="entry name" value="NUCLEAR_REC_DBD_2"/>
    <property type="match status" value="1"/>
</dbReference>
<evidence type="ECO:0000255" key="1">
    <source>
        <dbReference type="PROSITE-ProRule" id="PRU00407"/>
    </source>
</evidence>
<evidence type="ECO:0000255" key="2">
    <source>
        <dbReference type="PROSITE-ProRule" id="PRU01189"/>
    </source>
</evidence>
<evidence type="ECO:0000305" key="3"/>
<reference key="1">
    <citation type="journal article" date="1998" name="Science">
        <title>Genome sequence of the nematode C. elegans: a platform for investigating biology.</title>
        <authorList>
            <consortium name="The C. elegans sequencing consortium"/>
        </authorList>
    </citation>
    <scope>NUCLEOTIDE SEQUENCE [LARGE SCALE GENOMIC DNA]</scope>
    <source>
        <strain>Bristol N2</strain>
    </source>
</reference>
<gene>
    <name type="primary">nhr-103</name>
    <name type="ORF">F44C8.4</name>
</gene>
<keyword id="KW-0238">DNA-binding</keyword>
<keyword id="KW-0479">Metal-binding</keyword>
<keyword id="KW-0539">Nucleus</keyword>
<keyword id="KW-0675">Receptor</keyword>
<keyword id="KW-1185">Reference proteome</keyword>
<keyword id="KW-0804">Transcription</keyword>
<keyword id="KW-0805">Transcription regulation</keyword>
<keyword id="KW-0862">Zinc</keyword>
<keyword id="KW-0863">Zinc-finger</keyword>
<proteinExistence type="inferred from homology"/>